<organism>
    <name type="scientific">Cauliflower mosaic virus (strain W260)</name>
    <name type="common">CaMV</name>
    <dbReference type="NCBI Taxonomy" id="31558"/>
    <lineage>
        <taxon>Viruses</taxon>
        <taxon>Riboviria</taxon>
        <taxon>Pararnavirae</taxon>
        <taxon>Artverviricota</taxon>
        <taxon>Revtraviricetes</taxon>
        <taxon>Ortervirales</taxon>
        <taxon>Caulimoviridae</taxon>
        <taxon>Caulimovirus</taxon>
        <taxon>Caulimovirus tessellobrassicae</taxon>
    </lineage>
</organism>
<proteinExistence type="inferred from homology"/>
<dbReference type="EMBL" id="M94887">
    <property type="protein sequence ID" value="AAA46363.1"/>
    <property type="molecule type" value="Genomic_DNA"/>
</dbReference>
<dbReference type="GO" id="GO:0044219">
    <property type="term" value="C:host cell plasmodesma"/>
    <property type="evidence" value="ECO:0007669"/>
    <property type="project" value="UniProtKB-SubCell"/>
</dbReference>
<dbReference type="GO" id="GO:0046740">
    <property type="term" value="P:transport of virus in host, cell to cell"/>
    <property type="evidence" value="ECO:0007669"/>
    <property type="project" value="UniProtKB-KW"/>
</dbReference>
<dbReference type="InterPro" id="IPR051596">
    <property type="entry name" value="Caulimoviridae_Movement"/>
</dbReference>
<dbReference type="InterPro" id="IPR028919">
    <property type="entry name" value="Viral_movement"/>
</dbReference>
<dbReference type="PANTHER" id="PTHR47599">
    <property type="entry name" value="CELL-TO-CELL MOVEMENT PROTEIN"/>
    <property type="match status" value="1"/>
</dbReference>
<dbReference type="PANTHER" id="PTHR47599:SF3">
    <property type="entry name" value="CELL-TO-CELL MOVEMENT PROTEIN"/>
    <property type="match status" value="1"/>
</dbReference>
<dbReference type="Pfam" id="PF01107">
    <property type="entry name" value="MP"/>
    <property type="match status" value="1"/>
</dbReference>
<accession>Q01089</accession>
<reference key="1">
    <citation type="journal article" date="1992" name="Virology">
        <title>Three regions of cauliflower mosaic virus strain W260 are involved in systemic infection of solanaceous hosts.</title>
        <authorList>
            <person name="Qiu S.G."/>
            <person name="Schoelz J.E."/>
        </authorList>
    </citation>
    <scope>NUCLEOTIDE SEQUENCE [GENOMIC DNA]</scope>
</reference>
<feature type="chain" id="PRO_0000222063" description="Movement protein">
    <location>
        <begin position="1"/>
        <end position="327"/>
    </location>
</feature>
<feature type="coiled-coil region" evidence="1">
    <location>
        <begin position="297"/>
        <end position="327"/>
    </location>
</feature>
<name>MVP_CAMVW</name>
<protein>
    <recommendedName>
        <fullName>Movement protein</fullName>
        <shortName>Mov</shortName>
    </recommendedName>
    <alternativeName>
        <fullName>Cell-to-cell transport protein</fullName>
    </alternativeName>
</protein>
<organismHost>
    <name type="scientific">Arabidopsis thaliana</name>
    <name type="common">Mouse-ear cress</name>
    <dbReference type="NCBI Taxonomy" id="3702"/>
</organismHost>
<organismHost>
    <name type="scientific">Brassica</name>
    <dbReference type="NCBI Taxonomy" id="3705"/>
</organismHost>
<organismHost>
    <name type="scientific">Raphanus</name>
    <dbReference type="NCBI Taxonomy" id="3725"/>
</organismHost>
<keyword id="KW-0175">Coiled coil</keyword>
<keyword id="KW-1031">Host cell junction</keyword>
<keyword id="KW-0945">Host-virus interaction</keyword>
<keyword id="KW-0813">Transport</keyword>
<keyword id="KW-0916">Viral movement protein</keyword>
<sequence>MDLYPEENTQSEQSHNSENNMQIFKSENSDGFSSDLMISNDQLKNISKTQLTLEKEKIFKMPNVLSQVMKKAFSRKNEILYCVSTKELSVDIHDATGKVYLPLITKEEINKRLSSLKPEVRRTMSMVHLGAVKILLKAQFRNGIDTPIKIALIDDRINSRKDCLLGAAKGNLAYGKFMFTVYPKFGISLNTQRLNQTLSLIHDFENKNLMNKGDKVMTITYIVGYALTNSHHSIDYQSNATIELEDVFQEIGNVQQSEFCTIQNDECNWAIDIAQNKALLGAKTKSQIGNSLQIGNSASSSNTENELARVSQNIDLLKNKLKEICGE</sequence>
<comment type="function">
    <text evidence="1">Transports viral genome to neighboring plant cells directly through plasmosdesmata, without any budding. The movement protein allows efficient cell to cell propagation, by bypassing the host cell wall barrier. Acts by forming tubules structures that increase the size exclusion limit (SEL) of plasmodesmata, thereby allowing viral ribonucleocapsids to spread directly to neighboring cells (By similarity).</text>
</comment>
<comment type="subunit">
    <text evidence="1">Homotrimer, through the coiled-coil domain. Interacts with VAP. May interact (via N-terminus) with host prenylated Rab acceptor protein 1D (PRA1D).</text>
</comment>
<comment type="subcellular location">
    <subcellularLocation>
        <location>Host cell junction</location>
        <location>Host plasmodesma</location>
    </subcellularLocation>
    <text>Assembles in tubules that are embedded within modified plasmodesmata.</text>
</comment>
<comment type="similarity">
    <text evidence="2">Belongs to the caulimoviridae movement protein family.</text>
</comment>
<gene>
    <name type="ORF">ORF I</name>
</gene>
<evidence type="ECO:0000250" key="1"/>
<evidence type="ECO:0000305" key="2"/>